<sequence length="264" mass="29896">MNQYHDLLERILSDGAEKHDRTGTGTLSIFGHQMRFNLASGFPMLTTKKLPLKSIVHELLWFLKGETNVRYLREHGVSIWDEWADANGDLGPVYGSQWRSWPAPDGRSIDQIANVVDMIGRSPDSRRLIVSAWNPADVDKMALPPCHCLFQFYVADGKLSCQLYQRSADVFLGVPFNIASYALLTMMVAQVTGLKPGDFVHSLGDAHLYLNHLDQARLQLTRPTRSLPTMTINPEVKSIFAFRYEDFKLENYDPHPHIKAEVAV</sequence>
<feature type="chain" id="PRO_1000000640" description="Thymidylate synthase">
    <location>
        <begin position="1"/>
        <end position="264"/>
    </location>
</feature>
<feature type="active site" description="Nucleophile" evidence="1">
    <location>
        <position position="146"/>
    </location>
</feature>
<feature type="binding site" description="in other chain" evidence="1">
    <location>
        <position position="21"/>
    </location>
    <ligand>
        <name>dUMP</name>
        <dbReference type="ChEBI" id="CHEBI:246422"/>
        <note>ligand shared between dimeric partners</note>
    </ligand>
</feature>
<feature type="binding site" evidence="1">
    <location>
        <begin position="126"/>
        <end position="127"/>
    </location>
    <ligand>
        <name>dUMP</name>
        <dbReference type="ChEBI" id="CHEBI:246422"/>
        <note>ligand shared between dimeric partners</note>
    </ligand>
</feature>
<feature type="binding site" description="in other chain" evidence="1">
    <location>
        <begin position="166"/>
        <end position="169"/>
    </location>
    <ligand>
        <name>dUMP</name>
        <dbReference type="ChEBI" id="CHEBI:246422"/>
        <note>ligand shared between dimeric partners</note>
    </ligand>
</feature>
<feature type="binding site" evidence="1">
    <location>
        <position position="169"/>
    </location>
    <ligand>
        <name>(6R)-5,10-methylene-5,6,7,8-tetrahydrofolate</name>
        <dbReference type="ChEBI" id="CHEBI:15636"/>
    </ligand>
</feature>
<feature type="binding site" description="in other chain" evidence="1">
    <location>
        <position position="177"/>
    </location>
    <ligand>
        <name>dUMP</name>
        <dbReference type="ChEBI" id="CHEBI:246422"/>
        <note>ligand shared between dimeric partners</note>
    </ligand>
</feature>
<feature type="binding site" description="in other chain" evidence="1">
    <location>
        <begin position="207"/>
        <end position="209"/>
    </location>
    <ligand>
        <name>dUMP</name>
        <dbReference type="ChEBI" id="CHEBI:246422"/>
        <note>ligand shared between dimeric partners</note>
    </ligand>
</feature>
<feature type="binding site" evidence="1">
    <location>
        <position position="263"/>
    </location>
    <ligand>
        <name>(6R)-5,10-methylene-5,6,7,8-tetrahydrofolate</name>
        <dbReference type="ChEBI" id="CHEBI:15636"/>
    </ligand>
</feature>
<proteinExistence type="inferred from homology"/>
<evidence type="ECO:0000255" key="1">
    <source>
        <dbReference type="HAMAP-Rule" id="MF_00008"/>
    </source>
</evidence>
<comment type="function">
    <text evidence="1">Catalyzes the reductive methylation of 2'-deoxyuridine-5'-monophosphate (dUMP) to 2'-deoxythymidine-5'-monophosphate (dTMP) while utilizing 5,10-methylenetetrahydrofolate (mTHF) as the methyl donor and reductant in the reaction, yielding dihydrofolate (DHF) as a by-product. This enzymatic reaction provides an intracellular de novo source of dTMP, an essential precursor for DNA biosynthesis.</text>
</comment>
<comment type="catalytic activity">
    <reaction evidence="1">
        <text>dUMP + (6R)-5,10-methylene-5,6,7,8-tetrahydrofolate = 7,8-dihydrofolate + dTMP</text>
        <dbReference type="Rhea" id="RHEA:12104"/>
        <dbReference type="ChEBI" id="CHEBI:15636"/>
        <dbReference type="ChEBI" id="CHEBI:57451"/>
        <dbReference type="ChEBI" id="CHEBI:63528"/>
        <dbReference type="ChEBI" id="CHEBI:246422"/>
        <dbReference type="EC" id="2.1.1.45"/>
    </reaction>
</comment>
<comment type="pathway">
    <text evidence="1">Pyrimidine metabolism; dTTP biosynthesis.</text>
</comment>
<comment type="subunit">
    <text evidence="1">Homodimer.</text>
</comment>
<comment type="subcellular location">
    <subcellularLocation>
        <location evidence="1">Cytoplasm</location>
    </subcellularLocation>
</comment>
<comment type="similarity">
    <text evidence="1">Belongs to the thymidylate synthase family. Bacterial-type ThyA subfamily.</text>
</comment>
<accession>Q1QJT8</accession>
<protein>
    <recommendedName>
        <fullName evidence="1">Thymidylate synthase</fullName>
        <shortName evidence="1">TS</shortName>
        <shortName evidence="1">TSase</shortName>
        <ecNumber evidence="1">2.1.1.45</ecNumber>
    </recommendedName>
</protein>
<keyword id="KW-0963">Cytoplasm</keyword>
<keyword id="KW-0489">Methyltransferase</keyword>
<keyword id="KW-0545">Nucleotide biosynthesis</keyword>
<keyword id="KW-1185">Reference proteome</keyword>
<keyword id="KW-0808">Transferase</keyword>
<dbReference type="EC" id="2.1.1.45" evidence="1"/>
<dbReference type="EMBL" id="CP000319">
    <property type="protein sequence ID" value="ABE63509.1"/>
    <property type="molecule type" value="Genomic_DNA"/>
</dbReference>
<dbReference type="RefSeq" id="WP_011511175.1">
    <property type="nucleotide sequence ID" value="NC_007964.1"/>
</dbReference>
<dbReference type="SMR" id="Q1QJT8"/>
<dbReference type="STRING" id="323097.Nham_2730"/>
<dbReference type="KEGG" id="nha:Nham_2730"/>
<dbReference type="eggNOG" id="COG0207">
    <property type="taxonomic scope" value="Bacteria"/>
</dbReference>
<dbReference type="HOGENOM" id="CLU_021669_0_0_5"/>
<dbReference type="OrthoDB" id="9774633at2"/>
<dbReference type="UniPathway" id="UPA00575"/>
<dbReference type="Proteomes" id="UP000001953">
    <property type="component" value="Chromosome"/>
</dbReference>
<dbReference type="GO" id="GO:0005829">
    <property type="term" value="C:cytosol"/>
    <property type="evidence" value="ECO:0007669"/>
    <property type="project" value="TreeGrafter"/>
</dbReference>
<dbReference type="GO" id="GO:0004799">
    <property type="term" value="F:thymidylate synthase activity"/>
    <property type="evidence" value="ECO:0007669"/>
    <property type="project" value="UniProtKB-UniRule"/>
</dbReference>
<dbReference type="GO" id="GO:0006231">
    <property type="term" value="P:dTMP biosynthetic process"/>
    <property type="evidence" value="ECO:0007669"/>
    <property type="project" value="UniProtKB-UniRule"/>
</dbReference>
<dbReference type="GO" id="GO:0006235">
    <property type="term" value="P:dTTP biosynthetic process"/>
    <property type="evidence" value="ECO:0007669"/>
    <property type="project" value="UniProtKB-UniRule"/>
</dbReference>
<dbReference type="GO" id="GO:0032259">
    <property type="term" value="P:methylation"/>
    <property type="evidence" value="ECO:0007669"/>
    <property type="project" value="UniProtKB-KW"/>
</dbReference>
<dbReference type="CDD" id="cd00351">
    <property type="entry name" value="TS_Pyrimidine_HMase"/>
    <property type="match status" value="1"/>
</dbReference>
<dbReference type="FunFam" id="3.30.572.10:FF:000001">
    <property type="entry name" value="Thymidylate synthase"/>
    <property type="match status" value="1"/>
</dbReference>
<dbReference type="Gene3D" id="3.30.572.10">
    <property type="entry name" value="Thymidylate synthase/dCMP hydroxymethylase domain"/>
    <property type="match status" value="1"/>
</dbReference>
<dbReference type="HAMAP" id="MF_00008">
    <property type="entry name" value="Thymidy_synth_bact"/>
    <property type="match status" value="1"/>
</dbReference>
<dbReference type="InterPro" id="IPR045097">
    <property type="entry name" value="Thymidate_synth/dCMP_Mease"/>
</dbReference>
<dbReference type="InterPro" id="IPR023451">
    <property type="entry name" value="Thymidate_synth/dCMP_Mease_dom"/>
</dbReference>
<dbReference type="InterPro" id="IPR036926">
    <property type="entry name" value="Thymidate_synth/dCMP_Mease_sf"/>
</dbReference>
<dbReference type="InterPro" id="IPR000398">
    <property type="entry name" value="Thymidylate_synthase"/>
</dbReference>
<dbReference type="InterPro" id="IPR020940">
    <property type="entry name" value="Thymidylate_synthase_AS"/>
</dbReference>
<dbReference type="NCBIfam" id="NF002497">
    <property type="entry name" value="PRK01827.1-3"/>
    <property type="match status" value="1"/>
</dbReference>
<dbReference type="NCBIfam" id="NF002499">
    <property type="entry name" value="PRK01827.1-5"/>
    <property type="match status" value="1"/>
</dbReference>
<dbReference type="NCBIfam" id="TIGR03284">
    <property type="entry name" value="thym_sym"/>
    <property type="match status" value="2"/>
</dbReference>
<dbReference type="PANTHER" id="PTHR11548:SF9">
    <property type="entry name" value="THYMIDYLATE SYNTHASE"/>
    <property type="match status" value="1"/>
</dbReference>
<dbReference type="PANTHER" id="PTHR11548">
    <property type="entry name" value="THYMIDYLATE SYNTHASE 1"/>
    <property type="match status" value="1"/>
</dbReference>
<dbReference type="Pfam" id="PF00303">
    <property type="entry name" value="Thymidylat_synt"/>
    <property type="match status" value="1"/>
</dbReference>
<dbReference type="PRINTS" id="PR00108">
    <property type="entry name" value="THYMDSNTHASE"/>
</dbReference>
<dbReference type="SUPFAM" id="SSF55831">
    <property type="entry name" value="Thymidylate synthase/dCMP hydroxymethylase"/>
    <property type="match status" value="1"/>
</dbReference>
<dbReference type="PROSITE" id="PS00091">
    <property type="entry name" value="THYMIDYLATE_SYNTHASE"/>
    <property type="match status" value="1"/>
</dbReference>
<reference key="1">
    <citation type="submission" date="2006-03" db="EMBL/GenBank/DDBJ databases">
        <title>Complete sequence of chromosome of Nitrobacter hamburgensis X14.</title>
        <authorList>
            <consortium name="US DOE Joint Genome Institute"/>
            <person name="Copeland A."/>
            <person name="Lucas S."/>
            <person name="Lapidus A."/>
            <person name="Barry K."/>
            <person name="Detter J.C."/>
            <person name="Glavina del Rio T."/>
            <person name="Hammon N."/>
            <person name="Israni S."/>
            <person name="Dalin E."/>
            <person name="Tice H."/>
            <person name="Pitluck S."/>
            <person name="Chain P."/>
            <person name="Malfatti S."/>
            <person name="Shin M."/>
            <person name="Vergez L."/>
            <person name="Schmutz J."/>
            <person name="Larimer F."/>
            <person name="Land M."/>
            <person name="Hauser L."/>
            <person name="Kyrpides N."/>
            <person name="Ivanova N."/>
            <person name="Ward B."/>
            <person name="Arp D."/>
            <person name="Klotz M."/>
            <person name="Stein L."/>
            <person name="O'Mullan G."/>
            <person name="Starkenburg S."/>
            <person name="Sayavedra L."/>
            <person name="Poret-Peterson A.T."/>
            <person name="Gentry M.E."/>
            <person name="Bruce D."/>
            <person name="Richardson P."/>
        </authorList>
    </citation>
    <scope>NUCLEOTIDE SEQUENCE [LARGE SCALE GENOMIC DNA]</scope>
    <source>
        <strain>DSM 10229 / NCIMB 13809 / X14</strain>
    </source>
</reference>
<name>TYSY_NITHX</name>
<gene>
    <name evidence="1" type="primary">thyA</name>
    <name type="ordered locus">Nham_2730</name>
</gene>
<organism>
    <name type="scientific">Nitrobacter hamburgensis (strain DSM 10229 / NCIMB 13809 / X14)</name>
    <dbReference type="NCBI Taxonomy" id="323097"/>
    <lineage>
        <taxon>Bacteria</taxon>
        <taxon>Pseudomonadati</taxon>
        <taxon>Pseudomonadota</taxon>
        <taxon>Alphaproteobacteria</taxon>
        <taxon>Hyphomicrobiales</taxon>
        <taxon>Nitrobacteraceae</taxon>
        <taxon>Nitrobacter</taxon>
    </lineage>
</organism>